<sequence length="84" mass="9874">MNDKTQHFSFDDAMEKKVKEILSEVYSALKEKGYNPIAQLVGYLISGDPTYITNHKNARSIIRRIERDEILEEIVKFYIDHNIE</sequence>
<name>Y1773_CALS8</name>
<feature type="chain" id="PRO_0000315247" description="UPF0297 protein Csac_1773">
    <location>
        <begin position="1"/>
        <end position="84"/>
    </location>
</feature>
<protein>
    <recommendedName>
        <fullName evidence="1">UPF0297 protein Csac_1773</fullName>
    </recommendedName>
</protein>
<organism>
    <name type="scientific">Caldicellulosiruptor saccharolyticus (strain ATCC 43494 / DSM 8903 / Tp8T 6331)</name>
    <dbReference type="NCBI Taxonomy" id="351627"/>
    <lineage>
        <taxon>Bacteria</taxon>
        <taxon>Bacillati</taxon>
        <taxon>Bacillota</taxon>
        <taxon>Bacillota incertae sedis</taxon>
        <taxon>Caldicellulosiruptorales</taxon>
        <taxon>Caldicellulosiruptoraceae</taxon>
        <taxon>Caldicellulosiruptor</taxon>
    </lineage>
</organism>
<evidence type="ECO:0000255" key="1">
    <source>
        <dbReference type="HAMAP-Rule" id="MF_01507"/>
    </source>
</evidence>
<dbReference type="EMBL" id="CP000679">
    <property type="protein sequence ID" value="ABP67358.2"/>
    <property type="molecule type" value="Genomic_DNA"/>
</dbReference>
<dbReference type="RefSeq" id="WP_011917292.1">
    <property type="nucleotide sequence ID" value="NC_009437.1"/>
</dbReference>
<dbReference type="SMR" id="A4XKC3"/>
<dbReference type="STRING" id="351627.Csac_1773"/>
<dbReference type="KEGG" id="csc:Csac_1773"/>
<dbReference type="eggNOG" id="COG4472">
    <property type="taxonomic scope" value="Bacteria"/>
</dbReference>
<dbReference type="HOGENOM" id="CLU_162466_0_0_9"/>
<dbReference type="OrthoDB" id="9796303at2"/>
<dbReference type="Proteomes" id="UP000000256">
    <property type="component" value="Chromosome"/>
</dbReference>
<dbReference type="HAMAP" id="MF_01507">
    <property type="entry name" value="UPF0297"/>
    <property type="match status" value="1"/>
</dbReference>
<dbReference type="InterPro" id="IPR009309">
    <property type="entry name" value="IreB"/>
</dbReference>
<dbReference type="NCBIfam" id="NF003997">
    <property type="entry name" value="PRK05473.1"/>
    <property type="match status" value="1"/>
</dbReference>
<dbReference type="PANTHER" id="PTHR40067">
    <property type="entry name" value="UPF0297 PROTEIN YRZL"/>
    <property type="match status" value="1"/>
</dbReference>
<dbReference type="PANTHER" id="PTHR40067:SF1">
    <property type="entry name" value="UPF0297 PROTEIN YRZL"/>
    <property type="match status" value="1"/>
</dbReference>
<dbReference type="Pfam" id="PF06135">
    <property type="entry name" value="IreB"/>
    <property type="match status" value="1"/>
</dbReference>
<dbReference type="PIRSF" id="PIRSF037258">
    <property type="entry name" value="DUF965_bac"/>
    <property type="match status" value="1"/>
</dbReference>
<reference key="1">
    <citation type="submission" date="2007-04" db="EMBL/GenBank/DDBJ databases">
        <title>Genome sequence of the thermophilic hydrogen-producing bacterium Caldicellulosiruptor saccharolyticus DSM 8903.</title>
        <authorList>
            <person name="Copeland A."/>
            <person name="Lucas S."/>
            <person name="Lapidus A."/>
            <person name="Barry K."/>
            <person name="Detter J.C."/>
            <person name="Glavina del Rio T."/>
            <person name="Hammon N."/>
            <person name="Israni S."/>
            <person name="Dalin E."/>
            <person name="Tice H."/>
            <person name="Pitluck S."/>
            <person name="Kiss H."/>
            <person name="Brettin T."/>
            <person name="Bruce D."/>
            <person name="Han C."/>
            <person name="Schmutz J."/>
            <person name="Larimer F."/>
            <person name="Land M."/>
            <person name="Hauser L."/>
            <person name="Kyrpides N."/>
            <person name="Lykidis A."/>
            <person name="van de Werken H.J.G."/>
            <person name="Verhaart M.R.A."/>
            <person name="VanFossen A.L."/>
            <person name="Lewis D.L."/>
            <person name="Nichols J.D."/>
            <person name="Goorissen H.P."/>
            <person name="van Niel E.W.J."/>
            <person name="Stams F.J.M."/>
            <person name="Willquist K.U."/>
            <person name="Ward D.E."/>
            <person name="van der Oost J."/>
            <person name="Kelly R.M."/>
            <person name="Kengen S.M.W."/>
            <person name="Richardson P."/>
        </authorList>
    </citation>
    <scope>NUCLEOTIDE SEQUENCE [LARGE SCALE GENOMIC DNA]</scope>
    <source>
        <strain>ATCC 43494 / DSM 8903 / Tp8T 6331</strain>
    </source>
</reference>
<comment type="similarity">
    <text evidence="1">Belongs to the UPF0297 family.</text>
</comment>
<proteinExistence type="inferred from homology"/>
<accession>A4XKC3</accession>
<gene>
    <name type="ordered locus">Csac_1773</name>
</gene>